<keyword id="KW-0025">Alternative splicing</keyword>
<keyword id="KW-1003">Cell membrane</keyword>
<keyword id="KW-0449">Lipoprotein</keyword>
<keyword id="KW-0472">Membrane</keyword>
<keyword id="KW-0564">Palmitate</keyword>
<keyword id="KW-1185">Reference proteome</keyword>
<keyword id="KW-0812">Transmembrane</keyword>
<keyword id="KW-1133">Transmembrane helix</keyword>
<accession>Q8BR26</accession>
<accession>Q810P6</accession>
<comment type="subcellular location">
    <subcellularLocation>
        <location evidence="1">Cell membrane</location>
        <topology evidence="1">Multi-pass membrane protein</topology>
    </subcellularLocation>
</comment>
<comment type="alternative products">
    <event type="alternative splicing"/>
    <isoform>
        <id>Q8BR26-1</id>
        <name>1</name>
        <sequence type="displayed"/>
    </isoform>
    <isoform>
        <id>Q8BR26-2</id>
        <name>2</name>
        <sequence type="described" ref="VSP_041596"/>
    </isoform>
    <isoform>
        <id>Q8BR26-3</id>
        <name>3</name>
        <sequence type="described" ref="VSP_041596 VSP_033398"/>
    </isoform>
</comment>
<comment type="similarity">
    <text evidence="6">Belongs to the CD225/Dispanin family.</text>
</comment>
<evidence type="ECO:0000250" key="1"/>
<evidence type="ECO:0000255" key="2"/>
<evidence type="ECO:0000256" key="3">
    <source>
        <dbReference type="SAM" id="MobiDB-lite"/>
    </source>
</evidence>
<evidence type="ECO:0000303" key="4">
    <source>
    </source>
</evidence>
<evidence type="ECO:0000303" key="5">
    <source>
    </source>
</evidence>
<evidence type="ECO:0000305" key="6"/>
<sequence length="201" mass="21555">MAQGPSQCPALLGAPASTTDGTQEARVPLDGAFWIPRPPAGSPKGCFACVSKPPALQAAAAPAPEPSASPPMAPTLFPMESKSSKTDSVRASGVPQACKHLAEKKTMTNPTTVIEVYPDTTEVNDYYLWSIFNFVYLNFCCLGFIALAYSLKVRDKKLLNDLNGAVEDAKTARLFNITSSALAASCIILIFIFLRYPLTDY</sequence>
<reference key="1">
    <citation type="journal article" date="2005" name="Science">
        <title>The transcriptional landscape of the mammalian genome.</title>
        <authorList>
            <person name="Carninci P."/>
            <person name="Kasukawa T."/>
            <person name="Katayama S."/>
            <person name="Gough J."/>
            <person name="Frith M.C."/>
            <person name="Maeda N."/>
            <person name="Oyama R."/>
            <person name="Ravasi T."/>
            <person name="Lenhard B."/>
            <person name="Wells C."/>
            <person name="Kodzius R."/>
            <person name="Shimokawa K."/>
            <person name="Bajic V.B."/>
            <person name="Brenner S.E."/>
            <person name="Batalov S."/>
            <person name="Forrest A.R."/>
            <person name="Zavolan M."/>
            <person name="Davis M.J."/>
            <person name="Wilming L.G."/>
            <person name="Aidinis V."/>
            <person name="Allen J.E."/>
            <person name="Ambesi-Impiombato A."/>
            <person name="Apweiler R."/>
            <person name="Aturaliya R.N."/>
            <person name="Bailey T.L."/>
            <person name="Bansal M."/>
            <person name="Baxter L."/>
            <person name="Beisel K.W."/>
            <person name="Bersano T."/>
            <person name="Bono H."/>
            <person name="Chalk A.M."/>
            <person name="Chiu K.P."/>
            <person name="Choudhary V."/>
            <person name="Christoffels A."/>
            <person name="Clutterbuck D.R."/>
            <person name="Crowe M.L."/>
            <person name="Dalla E."/>
            <person name="Dalrymple B.P."/>
            <person name="de Bono B."/>
            <person name="Della Gatta G."/>
            <person name="di Bernardo D."/>
            <person name="Down T."/>
            <person name="Engstrom P."/>
            <person name="Fagiolini M."/>
            <person name="Faulkner G."/>
            <person name="Fletcher C.F."/>
            <person name="Fukushima T."/>
            <person name="Furuno M."/>
            <person name="Futaki S."/>
            <person name="Gariboldi M."/>
            <person name="Georgii-Hemming P."/>
            <person name="Gingeras T.R."/>
            <person name="Gojobori T."/>
            <person name="Green R.E."/>
            <person name="Gustincich S."/>
            <person name="Harbers M."/>
            <person name="Hayashi Y."/>
            <person name="Hensch T.K."/>
            <person name="Hirokawa N."/>
            <person name="Hill D."/>
            <person name="Huminiecki L."/>
            <person name="Iacono M."/>
            <person name="Ikeo K."/>
            <person name="Iwama A."/>
            <person name="Ishikawa T."/>
            <person name="Jakt M."/>
            <person name="Kanapin A."/>
            <person name="Katoh M."/>
            <person name="Kawasawa Y."/>
            <person name="Kelso J."/>
            <person name="Kitamura H."/>
            <person name="Kitano H."/>
            <person name="Kollias G."/>
            <person name="Krishnan S.P."/>
            <person name="Kruger A."/>
            <person name="Kummerfeld S.K."/>
            <person name="Kurochkin I.V."/>
            <person name="Lareau L.F."/>
            <person name="Lazarevic D."/>
            <person name="Lipovich L."/>
            <person name="Liu J."/>
            <person name="Liuni S."/>
            <person name="McWilliam S."/>
            <person name="Madan Babu M."/>
            <person name="Madera M."/>
            <person name="Marchionni L."/>
            <person name="Matsuda H."/>
            <person name="Matsuzawa S."/>
            <person name="Miki H."/>
            <person name="Mignone F."/>
            <person name="Miyake S."/>
            <person name="Morris K."/>
            <person name="Mottagui-Tabar S."/>
            <person name="Mulder N."/>
            <person name="Nakano N."/>
            <person name="Nakauchi H."/>
            <person name="Ng P."/>
            <person name="Nilsson R."/>
            <person name="Nishiguchi S."/>
            <person name="Nishikawa S."/>
            <person name="Nori F."/>
            <person name="Ohara O."/>
            <person name="Okazaki Y."/>
            <person name="Orlando V."/>
            <person name="Pang K.C."/>
            <person name="Pavan W.J."/>
            <person name="Pavesi G."/>
            <person name="Pesole G."/>
            <person name="Petrovsky N."/>
            <person name="Piazza S."/>
            <person name="Reed J."/>
            <person name="Reid J.F."/>
            <person name="Ring B.Z."/>
            <person name="Ringwald M."/>
            <person name="Rost B."/>
            <person name="Ruan Y."/>
            <person name="Salzberg S.L."/>
            <person name="Sandelin A."/>
            <person name="Schneider C."/>
            <person name="Schoenbach C."/>
            <person name="Sekiguchi K."/>
            <person name="Semple C.A."/>
            <person name="Seno S."/>
            <person name="Sessa L."/>
            <person name="Sheng Y."/>
            <person name="Shibata Y."/>
            <person name="Shimada H."/>
            <person name="Shimada K."/>
            <person name="Silva D."/>
            <person name="Sinclair B."/>
            <person name="Sperling S."/>
            <person name="Stupka E."/>
            <person name="Sugiura K."/>
            <person name="Sultana R."/>
            <person name="Takenaka Y."/>
            <person name="Taki K."/>
            <person name="Tammoja K."/>
            <person name="Tan S.L."/>
            <person name="Tang S."/>
            <person name="Taylor M.S."/>
            <person name="Tegner J."/>
            <person name="Teichmann S.A."/>
            <person name="Ueda H.R."/>
            <person name="van Nimwegen E."/>
            <person name="Verardo R."/>
            <person name="Wei C.L."/>
            <person name="Yagi K."/>
            <person name="Yamanishi H."/>
            <person name="Zabarovsky E."/>
            <person name="Zhu S."/>
            <person name="Zimmer A."/>
            <person name="Hide W."/>
            <person name="Bult C."/>
            <person name="Grimmond S.M."/>
            <person name="Teasdale R.D."/>
            <person name="Liu E.T."/>
            <person name="Brusic V."/>
            <person name="Quackenbush J."/>
            <person name="Wahlestedt C."/>
            <person name="Mattick J.S."/>
            <person name="Hume D.A."/>
            <person name="Kai C."/>
            <person name="Sasaki D."/>
            <person name="Tomaru Y."/>
            <person name="Fukuda S."/>
            <person name="Kanamori-Katayama M."/>
            <person name="Suzuki M."/>
            <person name="Aoki J."/>
            <person name="Arakawa T."/>
            <person name="Iida J."/>
            <person name="Imamura K."/>
            <person name="Itoh M."/>
            <person name="Kato T."/>
            <person name="Kawaji H."/>
            <person name="Kawagashira N."/>
            <person name="Kawashima T."/>
            <person name="Kojima M."/>
            <person name="Kondo S."/>
            <person name="Konno H."/>
            <person name="Nakano K."/>
            <person name="Ninomiya N."/>
            <person name="Nishio T."/>
            <person name="Okada M."/>
            <person name="Plessy C."/>
            <person name="Shibata K."/>
            <person name="Shiraki T."/>
            <person name="Suzuki S."/>
            <person name="Tagami M."/>
            <person name="Waki K."/>
            <person name="Watahiki A."/>
            <person name="Okamura-Oho Y."/>
            <person name="Suzuki H."/>
            <person name="Kawai J."/>
            <person name="Hayashizaki Y."/>
        </authorList>
    </citation>
    <scope>NUCLEOTIDE SEQUENCE [LARGE SCALE MRNA] (ISOFORMS 2 AND 3)</scope>
    <source>
        <strain>C57BL/6J</strain>
        <tissue>Corpora quadrigemina</tissue>
    </source>
</reference>
<reference key="2">
    <citation type="journal article" date="2009" name="PLoS Biol.">
        <title>Lineage-specific biology revealed by a finished genome assembly of the mouse.</title>
        <authorList>
            <person name="Church D.M."/>
            <person name="Goodstadt L."/>
            <person name="Hillier L.W."/>
            <person name="Zody M.C."/>
            <person name="Goldstein S."/>
            <person name="She X."/>
            <person name="Bult C.J."/>
            <person name="Agarwala R."/>
            <person name="Cherry J.L."/>
            <person name="DiCuccio M."/>
            <person name="Hlavina W."/>
            <person name="Kapustin Y."/>
            <person name="Meric P."/>
            <person name="Maglott D."/>
            <person name="Birtle Z."/>
            <person name="Marques A.C."/>
            <person name="Graves T."/>
            <person name="Zhou S."/>
            <person name="Teague B."/>
            <person name="Potamousis K."/>
            <person name="Churas C."/>
            <person name="Place M."/>
            <person name="Herschleb J."/>
            <person name="Runnheim R."/>
            <person name="Forrest D."/>
            <person name="Amos-Landgraf J."/>
            <person name="Schwartz D.C."/>
            <person name="Cheng Z."/>
            <person name="Lindblad-Toh K."/>
            <person name="Eichler E.E."/>
            <person name="Ponting C.P."/>
        </authorList>
    </citation>
    <scope>NUCLEOTIDE SEQUENCE [LARGE SCALE GENOMIC DNA]</scope>
    <source>
        <strain>C57BL/6J</strain>
    </source>
</reference>
<reference key="3">
    <citation type="journal article" date="2004" name="Genome Res.">
        <title>The status, quality, and expansion of the NIH full-length cDNA project: the Mammalian Gene Collection (MGC).</title>
        <authorList>
            <consortium name="The MGC Project Team"/>
        </authorList>
    </citation>
    <scope>NUCLEOTIDE SEQUENCE [LARGE SCALE MRNA] (ISOFORM 2)</scope>
    <source>
        <tissue>Brain</tissue>
    </source>
</reference>
<reference key="4">
    <citation type="journal article" date="2012" name="PLoS ONE">
        <title>The dispanins: a novel gene family of ancient origin that contains 14 human members.</title>
        <authorList>
            <person name="Sallman Almen M."/>
            <person name="Bringeland N."/>
            <person name="Fredriksson R."/>
            <person name="Schioth H.B."/>
        </authorList>
    </citation>
    <scope>GENE FAMILY</scope>
</reference>
<dbReference type="EMBL" id="AK045822">
    <property type="protein sequence ID" value="BAC32504.1"/>
    <property type="molecule type" value="mRNA"/>
</dbReference>
<dbReference type="EMBL" id="AK163573">
    <property type="protein sequence ID" value="BAE37402.1"/>
    <property type="molecule type" value="mRNA"/>
</dbReference>
<dbReference type="EMBL" id="AC034099">
    <property type="status" value="NOT_ANNOTATED_CDS"/>
    <property type="molecule type" value="Genomic_DNA"/>
</dbReference>
<dbReference type="EMBL" id="BC049666">
    <property type="protein sequence ID" value="AAH49666.1"/>
    <property type="molecule type" value="mRNA"/>
</dbReference>
<dbReference type="CCDS" id="CCDS40191.1">
    <molecule id="Q8BR26-3"/>
</dbReference>
<dbReference type="CCDS" id="CCDS85467.1">
    <molecule id="Q8BR26-2"/>
</dbReference>
<dbReference type="CCDS" id="CCDS85468.1">
    <molecule id="Q8BR26-2"/>
</dbReference>
<dbReference type="RefSeq" id="NP_001334470.2">
    <molecule id="Q8BR26-2"/>
    <property type="nucleotide sequence ID" value="NM_001347541.4"/>
</dbReference>
<dbReference type="RefSeq" id="NP_001334471.1">
    <molecule id="Q8BR26-2"/>
    <property type="nucleotide sequence ID" value="NM_001347542.2"/>
</dbReference>
<dbReference type="RefSeq" id="NP_001406245.1">
    <molecule id="Q8BR26-2"/>
    <property type="nucleotide sequence ID" value="NM_001419316.1"/>
</dbReference>
<dbReference type="RefSeq" id="NP_001406246.1">
    <molecule id="Q8BR26-2"/>
    <property type="nucleotide sequence ID" value="NM_001419317.1"/>
</dbReference>
<dbReference type="RefSeq" id="NP_001406247.1">
    <molecule id="Q8BR26-2"/>
    <property type="nucleotide sequence ID" value="NM_001419318.1"/>
</dbReference>
<dbReference type="RefSeq" id="NP_796239.1">
    <molecule id="Q8BR26-3"/>
    <property type="nucleotide sequence ID" value="NM_177265.5"/>
</dbReference>
<dbReference type="RefSeq" id="XP_011240310.1">
    <molecule id="Q8BR26-3"/>
    <property type="nucleotide sequence ID" value="XM_011242008.4"/>
</dbReference>
<dbReference type="RefSeq" id="XP_011240312.1">
    <molecule id="Q8BR26-3"/>
    <property type="nucleotide sequence ID" value="XM_011242010.3"/>
</dbReference>
<dbReference type="RefSeq" id="XP_011240313.1">
    <molecule id="Q8BR26-3"/>
    <property type="nucleotide sequence ID" value="XM_011242011.4"/>
</dbReference>
<dbReference type="RefSeq" id="XP_011240314.1">
    <molecule id="Q8BR26-3"/>
    <property type="nucleotide sequence ID" value="XM_011242012.1"/>
</dbReference>
<dbReference type="RefSeq" id="XP_036009062.1">
    <molecule id="Q8BR26-3"/>
    <property type="nucleotide sequence ID" value="XM_036153169.1"/>
</dbReference>
<dbReference type="RefSeq" id="XP_036009063.1">
    <molecule id="Q8BR26-3"/>
    <property type="nucleotide sequence ID" value="XM_036153170.1"/>
</dbReference>
<dbReference type="FunCoup" id="Q8BR26">
    <property type="interactions" value="496"/>
</dbReference>
<dbReference type="STRING" id="10090.ENSMUSP00000101608"/>
<dbReference type="iPTMnet" id="Q8BR26"/>
<dbReference type="PhosphoSitePlus" id="Q8BR26"/>
<dbReference type="PaxDb" id="10090-ENSMUSP00000062728"/>
<dbReference type="ProteomicsDB" id="267276">
    <molecule id="Q8BR26-1"/>
</dbReference>
<dbReference type="ProteomicsDB" id="267277">
    <molecule id="Q8BR26-2"/>
</dbReference>
<dbReference type="ProteomicsDB" id="267278">
    <molecule id="Q8BR26-3"/>
</dbReference>
<dbReference type="DNASU" id="320802"/>
<dbReference type="Ensembl" id="ENSMUST00000059223.15">
    <molecule id="Q8BR26-3"/>
    <property type="protein sequence ID" value="ENSMUSP00000062728.9"/>
    <property type="gene ID" value="ENSMUSG00000045777.15"/>
</dbReference>
<dbReference type="Ensembl" id="ENSMUST00000084412.6">
    <molecule id="Q8BR26-2"/>
    <property type="protein sequence ID" value="ENSMUSP00000081450.6"/>
    <property type="gene ID" value="ENSMUSG00000045777.15"/>
</dbReference>
<dbReference type="Ensembl" id="ENSMUST00000105988.2">
    <molecule id="Q8BR26-1"/>
    <property type="protein sequence ID" value="ENSMUSP00000101608.2"/>
    <property type="gene ID" value="ENSMUSG00000045777.15"/>
</dbReference>
<dbReference type="GeneID" id="320802"/>
<dbReference type="KEGG" id="mmu:320802"/>
<dbReference type="UCSC" id="uc009kmt.1">
    <molecule id="Q8BR26-3"/>
    <property type="organism name" value="mouse"/>
</dbReference>
<dbReference type="UCSC" id="uc009kmu.1">
    <molecule id="Q8BR26-1"/>
    <property type="organism name" value="mouse"/>
</dbReference>
<dbReference type="AGR" id="MGI:2444776"/>
<dbReference type="CTD" id="402778"/>
<dbReference type="MGI" id="MGI:2444776">
    <property type="gene designation" value="Ifitm10"/>
</dbReference>
<dbReference type="VEuPathDB" id="HostDB:ENSMUSG00000045777"/>
<dbReference type="eggNOG" id="ENOG502SJYU">
    <property type="taxonomic scope" value="Eukaryota"/>
</dbReference>
<dbReference type="GeneTree" id="ENSGT00950000182857"/>
<dbReference type="HOGENOM" id="CLU_1634855_0_0_1"/>
<dbReference type="InParanoid" id="Q8BR26"/>
<dbReference type="OMA" id="CFACISK"/>
<dbReference type="PhylomeDB" id="Q8BR26"/>
<dbReference type="BioGRID-ORCS" id="320802">
    <property type="hits" value="1 hit in 28 CRISPR screens"/>
</dbReference>
<dbReference type="ChiTaRS" id="Ifitm10">
    <property type="organism name" value="mouse"/>
</dbReference>
<dbReference type="PRO" id="PR:Q8BR26"/>
<dbReference type="Proteomes" id="UP000000589">
    <property type="component" value="Chromosome 7"/>
</dbReference>
<dbReference type="RNAct" id="Q8BR26">
    <property type="molecule type" value="protein"/>
</dbReference>
<dbReference type="Bgee" id="ENSMUSG00000045777">
    <property type="expression patterns" value="Expressed in facial nucleus and 134 other cell types or tissues"/>
</dbReference>
<dbReference type="GO" id="GO:0005886">
    <property type="term" value="C:plasma membrane"/>
    <property type="evidence" value="ECO:0007669"/>
    <property type="project" value="UniProtKB-SubCell"/>
</dbReference>
<dbReference type="InterPro" id="IPR007593">
    <property type="entry name" value="CD225/Dispanin_fam"/>
</dbReference>
<dbReference type="InterPro" id="IPR051517">
    <property type="entry name" value="IFITM_antiviral_protein"/>
</dbReference>
<dbReference type="PANTHER" id="PTHR13999">
    <property type="entry name" value="INTERFERON INDUCIBLE TRANSMEMBRANE PROTEIN"/>
    <property type="match status" value="1"/>
</dbReference>
<dbReference type="PANTHER" id="PTHR13999:SF9">
    <property type="entry name" value="INTERFERON-INDUCED TRANSMEMBRANE PROTEIN 10"/>
    <property type="match status" value="1"/>
</dbReference>
<dbReference type="Pfam" id="PF04505">
    <property type="entry name" value="CD225"/>
    <property type="match status" value="1"/>
</dbReference>
<name>IFM10_MOUSE</name>
<organism>
    <name type="scientific">Mus musculus</name>
    <name type="common">Mouse</name>
    <dbReference type="NCBI Taxonomy" id="10090"/>
    <lineage>
        <taxon>Eukaryota</taxon>
        <taxon>Metazoa</taxon>
        <taxon>Chordata</taxon>
        <taxon>Craniata</taxon>
        <taxon>Vertebrata</taxon>
        <taxon>Euteleostomi</taxon>
        <taxon>Mammalia</taxon>
        <taxon>Eutheria</taxon>
        <taxon>Euarchontoglires</taxon>
        <taxon>Glires</taxon>
        <taxon>Rodentia</taxon>
        <taxon>Myomorpha</taxon>
        <taxon>Muroidea</taxon>
        <taxon>Muridae</taxon>
        <taxon>Murinae</taxon>
        <taxon>Mus</taxon>
        <taxon>Mus</taxon>
    </lineage>
</organism>
<feature type="chain" id="PRO_0000332962" description="Interferon-induced transmembrane protein 10">
    <location>
        <begin position="1"/>
        <end position="201"/>
    </location>
</feature>
<feature type="topological domain" description="Extracellular" evidence="2">
    <location>
        <begin position="1"/>
        <end position="127"/>
    </location>
</feature>
<feature type="transmembrane region" description="Helical" evidence="2">
    <location>
        <begin position="128"/>
        <end position="148"/>
    </location>
</feature>
<feature type="topological domain" description="Cytoplasmic" evidence="2">
    <location>
        <begin position="149"/>
        <end position="173"/>
    </location>
</feature>
<feature type="transmembrane region" description="Helical" evidence="2">
    <location>
        <begin position="174"/>
        <end position="194"/>
    </location>
</feature>
<feature type="topological domain" description="Extracellular" evidence="2">
    <location>
        <begin position="195"/>
        <end position="201"/>
    </location>
</feature>
<feature type="region of interest" description="Disordered" evidence="3">
    <location>
        <begin position="1"/>
        <end position="23"/>
    </location>
</feature>
<feature type="region of interest" description="Disordered" evidence="3">
    <location>
        <begin position="60"/>
        <end position="88"/>
    </location>
</feature>
<feature type="compositionally biased region" description="Pro residues" evidence="3">
    <location>
        <begin position="63"/>
        <end position="73"/>
    </location>
</feature>
<feature type="lipid moiety-binding region" description="S-palmitoyl cysteine" evidence="1">
    <location>
        <position position="140"/>
    </location>
</feature>
<feature type="lipid moiety-binding region" description="S-palmitoyl cysteine" evidence="1">
    <location>
        <position position="141"/>
    </location>
</feature>
<feature type="splice variant" id="VSP_041596" description="In isoform 2 and isoform 3." evidence="4 5">
    <location>
        <begin position="1"/>
        <end position="71"/>
    </location>
</feature>
<feature type="splice variant" id="VSP_033398" description="In isoform 3." evidence="5">
    <original>VRDKKLLNDLNGAVEDAKTARLFNITSSALAASCIILIFIFLRYPLTDY</original>
    <variation>RTLTNTNRGKKGCLATQDTSALCCLLQGAHPEEGDGAICYVRDHRACVVGHTYNPSPGEAEEGTWMAQRDNTFEKNSAQHC</variation>
    <location>
        <begin position="153"/>
        <end position="201"/>
    </location>
</feature>
<protein>
    <recommendedName>
        <fullName>Interferon-induced transmembrane protein 10</fullName>
    </recommendedName>
    <alternativeName>
        <fullName>Dispanin subfamily A member 3</fullName>
        <shortName>DSPA3</shortName>
    </alternativeName>
</protein>
<proteinExistence type="evidence at transcript level"/>
<gene>
    <name type="primary">Ifitm10</name>
</gene>